<reference key="1">
    <citation type="journal article" date="2003" name="Nat. Genet.">
        <title>Mutations of the X-linked genes encoding neuroligins NLGN3 and NLGN4 are associated with autism.</title>
        <authorList>
            <person name="Jamain S."/>
            <person name="Quach H."/>
            <person name="Betancur C."/>
            <person name="Rastam M."/>
            <person name="Colineaux C."/>
            <person name="Gillberg I.C."/>
            <person name="Soderstrom H."/>
            <person name="Giros B."/>
            <person name="Leboyer M."/>
            <person name="Gillberg C."/>
            <person name="Bourgeron T."/>
            <person name="Nyden A."/>
            <person name="Philippe A."/>
            <person name="Cohen D."/>
            <person name="Chabane N."/>
            <person name="Mouren-Simeoni M.C."/>
            <person name="Brice A."/>
            <person name="Sponheim E."/>
            <person name="Spurkland I."/>
            <person name="Skjeldal O.H."/>
            <person name="Coleman M."/>
            <person name="Pearl P.L."/>
            <person name="Cohen I.L."/>
            <person name="Tsiouris J."/>
            <person name="Zappella M."/>
            <person name="Menchetti G."/>
            <person name="Pompella A."/>
            <person name="Aschauer H."/>
            <person name="Van Maldergem L."/>
        </authorList>
    </citation>
    <scope>NUCLEOTIDE SEQUENCE [MRNA]</scope>
</reference>
<reference key="2">
    <citation type="journal article" date="2000" name="DNA Res.">
        <title>Prediction of the coding sequences of unidentified human genes. XVI. The complete sequences of 150 new cDNA clones from brain which code for large proteins in vitro.</title>
        <authorList>
            <person name="Nagase T."/>
            <person name="Kikuno R."/>
            <person name="Ishikawa K."/>
            <person name="Hirosawa M."/>
            <person name="Ohara O."/>
        </authorList>
    </citation>
    <scope>NUCLEOTIDE SEQUENCE [LARGE SCALE MRNA] OF 286-835</scope>
    <source>
        <tissue>Brain</tissue>
    </source>
</reference>
<reference key="3">
    <citation type="journal article" date="1997" name="Science">
        <title>Binding of neuroligins to PSD-95.</title>
        <authorList>
            <person name="Irie M."/>
            <person name="Hata Y."/>
            <person name="Takeuchi M."/>
            <person name="Ichtchenko K."/>
            <person name="Toyoda A."/>
            <person name="Hirao K."/>
            <person name="Takai Y."/>
            <person name="Rosahl T.W."/>
            <person name="Suedhof T.C."/>
        </authorList>
    </citation>
    <scope>INTERACTION WITH DLG4</scope>
</reference>
<reference key="4">
    <citation type="journal article" date="2008" name="Endocrinology">
        <title>Expression of neurexin, neuroligin, and their cytoplasmic binding partners in the pancreatic beta-cells and the involvement of neuroligin in insulin secretion.</title>
        <authorList>
            <person name="Suckow A.T."/>
            <person name="Comoletti D."/>
            <person name="Waldrop M.A."/>
            <person name="Mosedale M."/>
            <person name="Egodage S."/>
            <person name="Taylor P."/>
            <person name="Chessler S.D."/>
        </authorList>
    </citation>
    <scope>TISSUE SPECIFICITY</scope>
    <scope>ALTERNATIVE SPLICING</scope>
</reference>
<reference key="5">
    <citation type="journal article" date="2009" name="Proc. Natl. Acad. Sci. U.S.A.">
        <title>The synaptic proteins neurexins and neuroligins are widely expressed in the vascular system and contribute to its functions.</title>
        <authorList>
            <person name="Bottos A."/>
            <person name="Destro E."/>
            <person name="Rissone A."/>
            <person name="Graziano S."/>
            <person name="Cordara G."/>
            <person name="Assenzio B."/>
            <person name="Cera M.R."/>
            <person name="Mascia L."/>
            <person name="Bussolino F."/>
            <person name="Arese M."/>
        </authorList>
    </citation>
    <scope>TISSUE SPECIFICITY</scope>
</reference>
<reference key="6">
    <citation type="journal article" date="2013" name="J. Cell Biol.">
        <title>The adhesion protein IgSF9b is coupled to neuroligin 2 via S-SCAM to promote inhibitory synapse development.</title>
        <authorList>
            <person name="Woo J."/>
            <person name="Kwon S.K."/>
            <person name="Nam J."/>
            <person name="Choi S."/>
            <person name="Takahashi H."/>
            <person name="Krueger D."/>
            <person name="Park J."/>
            <person name="Lee Y."/>
            <person name="Bae J.Y."/>
            <person name="Lee D."/>
            <person name="Ko J."/>
            <person name="Kim H."/>
            <person name="Kim M.H."/>
            <person name="Bae Y.C."/>
            <person name="Chang S."/>
            <person name="Craig A.M."/>
            <person name="Kim E."/>
        </authorList>
    </citation>
    <scope>IDENTIFICATION IN A COMPLEX WITH MAGI2 AND IGSF9B</scope>
</reference>
<protein>
    <recommendedName>
        <fullName>Neuroligin-2</fullName>
    </recommendedName>
</protein>
<sequence>MWLLALCLVGLAGAQRGGGGPGGGAPGGPGLGLGSLGEERFPVVNTAYGRVRGVRRELNNEILGPVVQFLGVPYATPPLGARRFQPPEAPASWPGVRNATTLPPACPQNLHGALPAIMLPVWFTDNLEAAATYVQNQSEDCLYLNLYVPTEDGPLTKKRDEATLNPPDTDIRDPGKKPVMLFLHGGSYMEGTGNMFDGSVLAAYGNVIVATLNYRLGVLGFLSTGDQAAKGNYGLLDQIQALRWLSENIAHFGGDPERITIFGSGAGASCVNLLILSHHSEGLFQKAIAQSGTAISSWSVNYQPLKYTRLLAAKVGCDREDSAEAVECLRRKPSRELVDQDVQPARYHIAFGPVVDGDVVPDDPEILMQQGEFLNYDMLIGVNQGEGLKFVEDSAESEDGVSASAFDFTVSNFVDNLYGYPEGKDVLRETIKFMYTDWADRDNGEMRRKTLLALFTDHQWVAPAVATAKLHADYQSPVYFYTFYHHCQAEGRPEWADAAHGDELPYVFGVPMVGATDLFPCNFSKNDVMLSAVVMTYWTNFAKTGDPNQPVPQDTKFIHTKPNRFEEVVWSKFNSKEKQYLHIGLKPRVRDNYRANKVAFWLELVPHLHNLHTELFTTTTRLPPYATRWPPRPPAGAPGTRRPPPPATLPPEPEPEPGPRAYDRFPGDSRDYSTELSVTVAVGASLLFLNILAFAALYYKRDRRQELRCRRLSPPGGSGSGVPGGGPLLPAAGRELPPEEELVSLQLKRGGGVGADPAEALRPACPPDYTLALRRAPDDVPLLAPGALTLLPSGLGPPPPPPPPSLHPFGPFPPPPPTATSHNNTLPHPHSTTRV</sequence>
<gene>
    <name type="primary">NLGN2</name>
    <name type="synonym">KIAA1366</name>
</gene>
<feature type="signal peptide" evidence="4">
    <location>
        <begin position="1"/>
        <end position="14"/>
    </location>
</feature>
<feature type="chain" id="PRO_0000008643" description="Neuroligin-2">
    <location>
        <begin position="15"/>
        <end position="835"/>
    </location>
</feature>
<feature type="topological domain" description="Extracellular" evidence="4">
    <location>
        <begin position="15"/>
        <end position="677"/>
    </location>
</feature>
<feature type="transmembrane region" description="Helical" evidence="4">
    <location>
        <begin position="678"/>
        <end position="698"/>
    </location>
</feature>
<feature type="topological domain" description="Cytoplasmic" evidence="4">
    <location>
        <begin position="699"/>
        <end position="835"/>
    </location>
</feature>
<feature type="region of interest" description="Disordered" evidence="5">
    <location>
        <begin position="623"/>
        <end position="668"/>
    </location>
</feature>
<feature type="region of interest" description="Required for interaction with LHFPL4" evidence="3">
    <location>
        <begin position="678"/>
        <end position="698"/>
    </location>
</feature>
<feature type="region of interest" description="Disordered" evidence="5">
    <location>
        <begin position="790"/>
        <end position="835"/>
    </location>
</feature>
<feature type="compositionally biased region" description="Pro residues" evidence="5">
    <location>
        <begin position="630"/>
        <end position="658"/>
    </location>
</feature>
<feature type="compositionally biased region" description="Pro residues" evidence="5">
    <location>
        <begin position="795"/>
        <end position="818"/>
    </location>
</feature>
<feature type="compositionally biased region" description="Polar residues" evidence="5">
    <location>
        <begin position="823"/>
        <end position="835"/>
    </location>
</feature>
<feature type="modified residue" description="Phosphoserine" evidence="3">
    <location>
        <position position="713"/>
    </location>
</feature>
<feature type="modified residue" description="Phosphoserine" evidence="3">
    <location>
        <position position="718"/>
    </location>
</feature>
<feature type="glycosylation site" description="N-linked (GlcNAc...) asparagine" evidence="4">
    <location>
        <position position="98"/>
    </location>
</feature>
<feature type="glycosylation site" description="N-linked (GlcNAc...) asparagine" evidence="4">
    <location>
        <position position="136"/>
    </location>
</feature>
<feature type="glycosylation site" description="N-linked (GlcNAc...) asparagine" evidence="4">
    <location>
        <position position="522"/>
    </location>
</feature>
<feature type="disulfide bond" evidence="1">
    <location>
        <begin position="106"/>
        <end position="141"/>
    </location>
</feature>
<feature type="disulfide bond" evidence="1">
    <location>
        <begin position="317"/>
        <end position="328"/>
    </location>
</feature>
<feature type="disulfide bond" evidence="1">
    <location>
        <begin position="487"/>
        <end position="521"/>
    </location>
</feature>
<feature type="strand" evidence="11">
    <location>
        <begin position="43"/>
        <end position="45"/>
    </location>
</feature>
<feature type="strand" evidence="11">
    <location>
        <begin position="50"/>
        <end position="52"/>
    </location>
</feature>
<feature type="strand" evidence="11">
    <location>
        <begin position="54"/>
        <end position="57"/>
    </location>
</feature>
<feature type="strand" evidence="11">
    <location>
        <begin position="61"/>
        <end position="63"/>
    </location>
</feature>
<feature type="strand" evidence="11">
    <location>
        <begin position="65"/>
        <end position="73"/>
    </location>
</feature>
<feature type="turn" evidence="11">
    <location>
        <begin position="81"/>
        <end position="84"/>
    </location>
</feature>
<feature type="strand" evidence="11">
    <location>
        <begin position="94"/>
        <end position="98"/>
    </location>
</feature>
<feature type="strand" evidence="12">
    <location>
        <begin position="110"/>
        <end position="112"/>
    </location>
</feature>
<feature type="turn" evidence="11">
    <location>
        <begin position="116"/>
        <end position="118"/>
    </location>
</feature>
<feature type="helix" evidence="11">
    <location>
        <begin position="121"/>
        <end position="125"/>
    </location>
</feature>
<feature type="helix" evidence="11">
    <location>
        <begin position="127"/>
        <end position="131"/>
    </location>
</feature>
<feature type="helix" evidence="11">
    <location>
        <begin position="132"/>
        <end position="134"/>
    </location>
</feature>
<feature type="strand" evidence="11">
    <location>
        <begin position="135"/>
        <end position="137"/>
    </location>
</feature>
<feature type="strand" evidence="11">
    <location>
        <begin position="143"/>
        <end position="148"/>
    </location>
</feature>
<feature type="strand" evidence="11">
    <location>
        <begin position="177"/>
        <end position="183"/>
    </location>
</feature>
<feature type="strand" evidence="11">
    <location>
        <begin position="186"/>
        <end position="190"/>
    </location>
</feature>
<feature type="helix" evidence="11">
    <location>
        <begin position="193"/>
        <end position="195"/>
    </location>
</feature>
<feature type="helix" evidence="11">
    <location>
        <begin position="199"/>
        <end position="205"/>
    </location>
</feature>
<feature type="strand" evidence="11">
    <location>
        <begin position="208"/>
        <end position="212"/>
    </location>
</feature>
<feature type="helix" evidence="11">
    <location>
        <begin position="217"/>
        <end position="221"/>
    </location>
</feature>
<feature type="strand" evidence="11">
    <location>
        <begin position="225"/>
        <end position="228"/>
    </location>
</feature>
<feature type="helix" evidence="11">
    <location>
        <begin position="233"/>
        <end position="246"/>
    </location>
</feature>
<feature type="helix" evidence="11">
    <location>
        <begin position="249"/>
        <end position="252"/>
    </location>
</feature>
<feature type="strand" evidence="11">
    <location>
        <begin position="254"/>
        <end position="264"/>
    </location>
</feature>
<feature type="helix" evidence="11">
    <location>
        <begin position="266"/>
        <end position="276"/>
    </location>
</feature>
<feature type="turn" evidence="11">
    <location>
        <begin position="279"/>
        <end position="283"/>
    </location>
</feature>
<feature type="strand" evidence="11">
    <location>
        <begin position="285"/>
        <end position="291"/>
    </location>
</feature>
<feature type="strand" evidence="11">
    <location>
        <begin position="294"/>
        <end position="296"/>
    </location>
</feature>
<feature type="turn" evidence="11">
    <location>
        <begin position="297"/>
        <end position="299"/>
    </location>
</feature>
<feature type="strand" evidence="11">
    <location>
        <begin position="300"/>
        <end position="302"/>
    </location>
</feature>
<feature type="helix" evidence="11">
    <location>
        <begin position="304"/>
        <end position="314"/>
    </location>
</feature>
<feature type="helix" evidence="11">
    <location>
        <begin position="322"/>
        <end position="329"/>
    </location>
</feature>
<feature type="helix" evidence="11">
    <location>
        <begin position="334"/>
        <end position="338"/>
    </location>
</feature>
<feature type="strand" evidence="11">
    <location>
        <begin position="350"/>
        <end position="352"/>
    </location>
</feature>
<feature type="strand" evidence="11">
    <location>
        <begin position="357"/>
        <end position="360"/>
    </location>
</feature>
<feature type="helix" evidence="11">
    <location>
        <begin position="364"/>
        <end position="369"/>
    </location>
</feature>
<feature type="strand" evidence="11">
    <location>
        <begin position="377"/>
        <end position="383"/>
    </location>
</feature>
<feature type="helix" evidence="11">
    <location>
        <begin position="388"/>
        <end position="391"/>
    </location>
</feature>
<feature type="helix" evidence="11">
    <location>
        <begin position="403"/>
        <end position="417"/>
    </location>
</feature>
<feature type="helix" evidence="11">
    <location>
        <begin position="424"/>
        <end position="434"/>
    </location>
</feature>
<feature type="helix" evidence="12">
    <location>
        <begin position="438"/>
        <end position="440"/>
    </location>
</feature>
<feature type="helix" evidence="11">
    <location>
        <begin position="444"/>
        <end position="459"/>
    </location>
</feature>
<feature type="helix" evidence="11">
    <location>
        <begin position="461"/>
        <end position="473"/>
    </location>
</feature>
<feature type="strand" evidence="11">
    <location>
        <begin position="478"/>
        <end position="483"/>
    </location>
</feature>
<feature type="turn" evidence="11">
    <location>
        <begin position="500"/>
        <end position="503"/>
    </location>
</feature>
<feature type="helix" evidence="11">
    <location>
        <begin position="504"/>
        <end position="507"/>
    </location>
</feature>
<feature type="helix" evidence="11">
    <location>
        <begin position="510"/>
        <end position="512"/>
    </location>
</feature>
<feature type="strand" evidence="11">
    <location>
        <begin position="517"/>
        <end position="519"/>
    </location>
</feature>
<feature type="helix" evidence="11">
    <location>
        <begin position="525"/>
        <end position="544"/>
    </location>
</feature>
<feature type="strand" evidence="12">
    <location>
        <begin position="545"/>
        <end position="550"/>
    </location>
</feature>
<feature type="turn" evidence="11">
    <location>
        <begin position="575"/>
        <end position="577"/>
    </location>
</feature>
<feature type="strand" evidence="11">
    <location>
        <begin position="580"/>
        <end position="586"/>
    </location>
</feature>
<feature type="strand" evidence="11">
    <location>
        <begin position="588"/>
        <end position="591"/>
    </location>
</feature>
<feature type="helix" evidence="11">
    <location>
        <begin position="595"/>
        <end position="603"/>
    </location>
</feature>
<feature type="turn" evidence="11">
    <location>
        <begin position="604"/>
        <end position="607"/>
    </location>
</feature>
<organism>
    <name type="scientific">Homo sapiens</name>
    <name type="common">Human</name>
    <dbReference type="NCBI Taxonomy" id="9606"/>
    <lineage>
        <taxon>Eukaryota</taxon>
        <taxon>Metazoa</taxon>
        <taxon>Chordata</taxon>
        <taxon>Craniata</taxon>
        <taxon>Vertebrata</taxon>
        <taxon>Euteleostomi</taxon>
        <taxon>Mammalia</taxon>
        <taxon>Eutheria</taxon>
        <taxon>Euarchontoglires</taxon>
        <taxon>Primates</taxon>
        <taxon>Haplorrhini</taxon>
        <taxon>Catarrhini</taxon>
        <taxon>Hominidae</taxon>
        <taxon>Homo</taxon>
    </lineage>
</organism>
<comment type="function">
    <text evidence="1 3">Transmembrane scaffolding protein involved in cell-cell interactions via its interactions with neurexin family members. Mediates cell-cell interactions both in neurons and in other types of cells, such as Langerhans beta cells. Plays a role in synapse function and synaptic signal transmission, especially via gamma-aminobutyric acid receptors (GABA(A) receptors). Functions by recruiting and clustering synaptic proteins. Promotes clustering of postsynaptic GABRG2 and GPHN. Promotes clustering of postsynaptic LHFPL4 (By similarity). Modulates signaling by inhibitory synapses, and thereby plays a role in controlling the ratio of signaling by excitatory and inhibitory synapses and information processing. Required for normal signal amplitude from inhibitory synapses, but is not essential for normal signal frequency. May promote the initial formation of synapses, but is not essential for this. In vitro, triggers the de novo formation of presynaptic structures. Mediates cell-cell interactions between Langerhans beta cells and modulates insulin secretion (By similarity).</text>
</comment>
<comment type="subunit">
    <text evidence="2 3 8 9">Interacts with neurexins NRXN1, NRXN2 and NRXN3 (By similarity). Interaction with neurexins is mediated by heparan sulfate glycan modification on neurexin (By similarity). Interacts (via its C-terminus) with DLG4/PSD-95 (via PDZ domain 3) (PubMed:9278515). Interacts with PATJ (By similarity). Interacts with GPHN (By similarity). Interacts with MDGA1 and MDGA2 (By similarity). Found in a complex with MAGI2 and IGSF9B, where it interacts with MAGI2 (via WW 1, WW 2 and PDZ 2 domains) (PubMed:23751499). Identified in a complex of 720 kDa composed of LHFPL4, NLGN2, GABRA1, GABRB2, GABRG2 and GABRB3 (By similarity). Interacts with LHFPL4; leading to mutual regulation of the protein level and synaptic clustering (By similarity). Interacts with NLGN2 (By similarity).</text>
</comment>
<comment type="subcellular location">
    <subcellularLocation>
        <location evidence="1">Cell membrane</location>
        <topology evidence="1">Single-pass type I membrane protein</topology>
    </subcellularLocation>
    <subcellularLocation>
        <location evidence="1">Postsynaptic cell membrane</location>
    </subcellularLocation>
    <subcellularLocation>
        <location evidence="1">Presynaptic cell membrane</location>
    </subcellularLocation>
    <text evidence="1">Detected at postsynaptic membranes in brain. Detected at dendritic spines in cultured neurons. Colocalizes with GPHN and ARHGEF9 at neuronal cell membranes (By similarity). Localized at presynaptic membranes in retina. Colocalizes with GABRG2 at inhibitory synapses in the retina (By similarity).</text>
</comment>
<comment type="tissue specificity">
    <text evidence="6 7">Expressed in the blood vessel walls. Detected in colon, brain and pancreas islets of Langerhans (at protein level). Detected in brain, and at lower levels in pancreas islet beta cells.</text>
</comment>
<comment type="similarity">
    <text evidence="10">Belongs to the type-B carboxylesterase/lipase family.</text>
</comment>
<name>NLGN2_HUMAN</name>
<evidence type="ECO:0000250" key="1"/>
<evidence type="ECO:0000250" key="2">
    <source>
        <dbReference type="UniProtKB" id="Q62888"/>
    </source>
</evidence>
<evidence type="ECO:0000250" key="3">
    <source>
        <dbReference type="UniProtKB" id="Q69ZK9"/>
    </source>
</evidence>
<evidence type="ECO:0000255" key="4"/>
<evidence type="ECO:0000256" key="5">
    <source>
        <dbReference type="SAM" id="MobiDB-lite"/>
    </source>
</evidence>
<evidence type="ECO:0000269" key="6">
    <source>
    </source>
</evidence>
<evidence type="ECO:0000269" key="7">
    <source>
    </source>
</evidence>
<evidence type="ECO:0000269" key="8">
    <source>
    </source>
</evidence>
<evidence type="ECO:0000269" key="9">
    <source>
    </source>
</evidence>
<evidence type="ECO:0000305" key="10"/>
<evidence type="ECO:0007829" key="11">
    <source>
        <dbReference type="PDB" id="5XEQ"/>
    </source>
</evidence>
<evidence type="ECO:0007829" key="12">
    <source>
        <dbReference type="PDB" id="8GS4"/>
    </source>
</evidence>
<accession>Q8NFZ4</accession>
<accession>Q9P2I1</accession>
<keyword id="KW-0002">3D-structure</keyword>
<keyword id="KW-0130">Cell adhesion</keyword>
<keyword id="KW-1003">Cell membrane</keyword>
<keyword id="KW-0966">Cell projection</keyword>
<keyword id="KW-1015">Disulfide bond</keyword>
<keyword id="KW-0325">Glycoprotein</keyword>
<keyword id="KW-0472">Membrane</keyword>
<keyword id="KW-0597">Phosphoprotein</keyword>
<keyword id="KW-0628">Postsynaptic cell membrane</keyword>
<keyword id="KW-1267">Proteomics identification</keyword>
<keyword id="KW-1185">Reference proteome</keyword>
<keyword id="KW-0732">Signal</keyword>
<keyword id="KW-0770">Synapse</keyword>
<keyword id="KW-0812">Transmembrane</keyword>
<keyword id="KW-1133">Transmembrane helix</keyword>
<proteinExistence type="evidence at protein level"/>
<dbReference type="EMBL" id="AF376802">
    <property type="protein sequence ID" value="AAM46111.1"/>
    <property type="molecule type" value="mRNA"/>
</dbReference>
<dbReference type="EMBL" id="AB037787">
    <property type="protein sequence ID" value="BAA92604.1"/>
    <property type="molecule type" value="mRNA"/>
</dbReference>
<dbReference type="CCDS" id="CCDS11103.1"/>
<dbReference type="RefSeq" id="NP_065846.1">
    <property type="nucleotide sequence ID" value="NM_020795.4"/>
</dbReference>
<dbReference type="RefSeq" id="XP_047292418.1">
    <property type="nucleotide sequence ID" value="XM_047436462.1"/>
</dbReference>
<dbReference type="RefSeq" id="XP_047292419.1">
    <property type="nucleotide sequence ID" value="XM_047436463.1"/>
</dbReference>
<dbReference type="RefSeq" id="XP_047292420.1">
    <property type="nucleotide sequence ID" value="XM_047436464.1"/>
</dbReference>
<dbReference type="RefSeq" id="XP_054172726.1">
    <property type="nucleotide sequence ID" value="XM_054316751.1"/>
</dbReference>
<dbReference type="RefSeq" id="XP_054172727.1">
    <property type="nucleotide sequence ID" value="XM_054316752.1"/>
</dbReference>
<dbReference type="RefSeq" id="XP_054172728.1">
    <property type="nucleotide sequence ID" value="XM_054316753.1"/>
</dbReference>
<dbReference type="RefSeq" id="XP_054187990.1">
    <property type="nucleotide sequence ID" value="XM_054332015.1"/>
</dbReference>
<dbReference type="RefSeq" id="XP_054187991.1">
    <property type="nucleotide sequence ID" value="XM_054332016.1"/>
</dbReference>
<dbReference type="RefSeq" id="XP_054187992.1">
    <property type="nucleotide sequence ID" value="XM_054332017.1"/>
</dbReference>
<dbReference type="PDB" id="5XEQ">
    <property type="method" value="X-ray"/>
    <property type="resolution" value="3.14 A"/>
    <property type="chains" value="A=42-611"/>
</dbReference>
<dbReference type="PDB" id="8GS4">
    <property type="method" value="EM"/>
    <property type="resolution" value="3.50 A"/>
    <property type="chains" value="A/B=1-835"/>
</dbReference>
<dbReference type="PDBsum" id="5XEQ"/>
<dbReference type="PDBsum" id="8GS4"/>
<dbReference type="EMDB" id="EMD-34220"/>
<dbReference type="SMR" id="Q8NFZ4"/>
<dbReference type="BioGRID" id="121611">
    <property type="interactions" value="111"/>
</dbReference>
<dbReference type="FunCoup" id="Q8NFZ4">
    <property type="interactions" value="641"/>
</dbReference>
<dbReference type="IntAct" id="Q8NFZ4">
    <property type="interactions" value="50"/>
</dbReference>
<dbReference type="STRING" id="9606.ENSP00000305288"/>
<dbReference type="ESTHER" id="human-NLGN2">
    <property type="family name" value="Neuroligin"/>
</dbReference>
<dbReference type="MEROPS" id="S09.995"/>
<dbReference type="TCDB" id="8.A.117.1.1">
    <property type="family name" value="the neuroligin (nlg) family"/>
</dbReference>
<dbReference type="GlyCosmos" id="Q8NFZ4">
    <property type="glycosylation" value="4 sites, 1 glycan"/>
</dbReference>
<dbReference type="GlyGen" id="Q8NFZ4">
    <property type="glycosylation" value="6 sites, 1 N-linked glycan (1 site), 1 O-linked glycan (1 site)"/>
</dbReference>
<dbReference type="iPTMnet" id="Q8NFZ4"/>
<dbReference type="PhosphoSitePlus" id="Q8NFZ4"/>
<dbReference type="BioMuta" id="NLGN2"/>
<dbReference type="DMDM" id="31076824"/>
<dbReference type="jPOST" id="Q8NFZ4"/>
<dbReference type="MassIVE" id="Q8NFZ4"/>
<dbReference type="PaxDb" id="9606-ENSP00000305288"/>
<dbReference type="PeptideAtlas" id="Q8NFZ4"/>
<dbReference type="ProteomicsDB" id="73397"/>
<dbReference type="Pumba" id="Q8NFZ4"/>
<dbReference type="ABCD" id="Q8NFZ4">
    <property type="antibodies" value="1 sequenced antibody"/>
</dbReference>
<dbReference type="Antibodypedia" id="24107">
    <property type="antibodies" value="108 antibodies from 31 providers"/>
</dbReference>
<dbReference type="DNASU" id="57555"/>
<dbReference type="Ensembl" id="ENST00000302926.7">
    <property type="protein sequence ID" value="ENSP00000305288.2"/>
    <property type="gene ID" value="ENSG00000169992.10"/>
</dbReference>
<dbReference type="Ensembl" id="ENST00000575301.5">
    <property type="protein sequence ID" value="ENSP00000461168.1"/>
    <property type="gene ID" value="ENSG00000169992.10"/>
</dbReference>
<dbReference type="Ensembl" id="ENST00000639647.1">
    <property type="protein sequence ID" value="ENSP00000492323.1"/>
    <property type="gene ID" value="ENSG00000283859.2"/>
</dbReference>
<dbReference type="Ensembl" id="ENST00000640620.2">
    <property type="protein sequence ID" value="ENSP00000492198.1"/>
    <property type="gene ID" value="ENSG00000283859.2"/>
</dbReference>
<dbReference type="GeneID" id="57555"/>
<dbReference type="KEGG" id="hsa:57555"/>
<dbReference type="MANE-Select" id="ENST00000302926.7">
    <property type="protein sequence ID" value="ENSP00000305288.2"/>
    <property type="RefSeq nucleotide sequence ID" value="NM_020795.4"/>
    <property type="RefSeq protein sequence ID" value="NP_065846.1"/>
</dbReference>
<dbReference type="UCSC" id="uc002ggt.3">
    <property type="organism name" value="human"/>
</dbReference>
<dbReference type="AGR" id="HGNC:14290"/>
<dbReference type="CTD" id="57555"/>
<dbReference type="DisGeNET" id="57555"/>
<dbReference type="GeneCards" id="NLGN2"/>
<dbReference type="HGNC" id="HGNC:14290">
    <property type="gene designation" value="NLGN2"/>
</dbReference>
<dbReference type="HPA" id="ENSG00000169992">
    <property type="expression patterns" value="Tissue enhanced (brain)"/>
</dbReference>
<dbReference type="MalaCards" id="NLGN2"/>
<dbReference type="MIM" id="606479">
    <property type="type" value="gene"/>
</dbReference>
<dbReference type="neXtProt" id="NX_Q8NFZ4"/>
<dbReference type="OpenTargets" id="ENSG00000169992"/>
<dbReference type="PharmGKB" id="PA31648"/>
<dbReference type="VEuPathDB" id="HostDB:ENSG00000169992"/>
<dbReference type="eggNOG" id="KOG1516">
    <property type="taxonomic scope" value="Eukaryota"/>
</dbReference>
<dbReference type="GeneTree" id="ENSGT00940000160598"/>
<dbReference type="HOGENOM" id="CLU_006586_5_1_1"/>
<dbReference type="InParanoid" id="Q8NFZ4"/>
<dbReference type="OMA" id="APKPCLM"/>
<dbReference type="OrthoDB" id="408631at2759"/>
<dbReference type="PAN-GO" id="Q8NFZ4">
    <property type="GO annotations" value="11 GO annotations based on evolutionary models"/>
</dbReference>
<dbReference type="PhylomeDB" id="Q8NFZ4"/>
<dbReference type="TreeFam" id="TF326187"/>
<dbReference type="PathwayCommons" id="Q8NFZ4"/>
<dbReference type="Reactome" id="R-HSA-6794361">
    <property type="pathway name" value="Neurexins and neuroligins"/>
</dbReference>
<dbReference type="SignaLink" id="Q8NFZ4"/>
<dbReference type="SIGNOR" id="Q8NFZ4"/>
<dbReference type="BioGRID-ORCS" id="57555">
    <property type="hits" value="10 hits in 1155 CRISPR screens"/>
</dbReference>
<dbReference type="CD-CODE" id="FB4E32DD">
    <property type="entry name" value="Presynaptic clusters and postsynaptic densities"/>
</dbReference>
<dbReference type="ChiTaRS" id="NLGN2">
    <property type="organism name" value="human"/>
</dbReference>
<dbReference type="GeneWiki" id="NLGN2"/>
<dbReference type="GenomeRNAi" id="57555"/>
<dbReference type="Pharos" id="Q8NFZ4">
    <property type="development level" value="Tbio"/>
</dbReference>
<dbReference type="PRO" id="PR:Q8NFZ4"/>
<dbReference type="Proteomes" id="UP000005640">
    <property type="component" value="Chromosome 17"/>
</dbReference>
<dbReference type="RNAct" id="Q8NFZ4">
    <property type="molecule type" value="protein"/>
</dbReference>
<dbReference type="Bgee" id="ENSG00000169992">
    <property type="expression patterns" value="Expressed in cortical plate and 96 other cell types or tissues"/>
</dbReference>
<dbReference type="ExpressionAtlas" id="Q8NFZ4">
    <property type="expression patterns" value="baseline and differential"/>
</dbReference>
<dbReference type="GO" id="GO:0030424">
    <property type="term" value="C:axon"/>
    <property type="evidence" value="ECO:0007669"/>
    <property type="project" value="Ensembl"/>
</dbReference>
<dbReference type="GO" id="GO:0009986">
    <property type="term" value="C:cell surface"/>
    <property type="evidence" value="ECO:0000250"/>
    <property type="project" value="BHF-UCL"/>
</dbReference>
<dbReference type="GO" id="GO:0043198">
    <property type="term" value="C:dendritic shaft"/>
    <property type="evidence" value="ECO:0007669"/>
    <property type="project" value="Ensembl"/>
</dbReference>
<dbReference type="GO" id="GO:0098691">
    <property type="term" value="C:dopaminergic synapse"/>
    <property type="evidence" value="ECO:0007669"/>
    <property type="project" value="Ensembl"/>
</dbReference>
<dbReference type="GO" id="GO:0060076">
    <property type="term" value="C:excitatory synapse"/>
    <property type="evidence" value="ECO:0007669"/>
    <property type="project" value="Ensembl"/>
</dbReference>
<dbReference type="GO" id="GO:0098690">
    <property type="term" value="C:glycinergic synapse"/>
    <property type="evidence" value="ECO:0007669"/>
    <property type="project" value="Ensembl"/>
</dbReference>
<dbReference type="GO" id="GO:0060077">
    <property type="term" value="C:inhibitory synapse"/>
    <property type="evidence" value="ECO:0000250"/>
    <property type="project" value="BHF-UCL"/>
</dbReference>
<dbReference type="GO" id="GO:0016020">
    <property type="term" value="C:membrane"/>
    <property type="evidence" value="ECO:0000304"/>
    <property type="project" value="ARUK-UCL"/>
</dbReference>
<dbReference type="GO" id="GO:0005886">
    <property type="term" value="C:plasma membrane"/>
    <property type="evidence" value="ECO:0000304"/>
    <property type="project" value="Reactome"/>
</dbReference>
<dbReference type="GO" id="GO:0045211">
    <property type="term" value="C:postsynaptic membrane"/>
    <property type="evidence" value="ECO:0000250"/>
    <property type="project" value="BHF-UCL"/>
</dbReference>
<dbReference type="GO" id="GO:0099634">
    <property type="term" value="C:postsynaptic specialization membrane"/>
    <property type="evidence" value="ECO:0000318"/>
    <property type="project" value="GO_Central"/>
</dbReference>
<dbReference type="GO" id="GO:0042734">
    <property type="term" value="C:presynaptic membrane"/>
    <property type="evidence" value="ECO:0007669"/>
    <property type="project" value="UniProtKB-SubCell"/>
</dbReference>
<dbReference type="GO" id="GO:0097470">
    <property type="term" value="C:ribbon synapse"/>
    <property type="evidence" value="ECO:0007669"/>
    <property type="project" value="Ensembl"/>
</dbReference>
<dbReference type="GO" id="GO:0098983">
    <property type="term" value="C:symmetric, GABA-ergic, inhibitory synapse"/>
    <property type="evidence" value="ECO:0000304"/>
    <property type="project" value="ARUK-UCL"/>
</dbReference>
<dbReference type="GO" id="GO:0045202">
    <property type="term" value="C:synapse"/>
    <property type="evidence" value="ECO:0000250"/>
    <property type="project" value="BHF-UCL"/>
</dbReference>
<dbReference type="GO" id="GO:0050839">
    <property type="term" value="F:cell adhesion molecule binding"/>
    <property type="evidence" value="ECO:0000250"/>
    <property type="project" value="BHF-UCL"/>
</dbReference>
<dbReference type="GO" id="GO:0042802">
    <property type="term" value="F:identical protein binding"/>
    <property type="evidence" value="ECO:0007669"/>
    <property type="project" value="Ensembl"/>
</dbReference>
<dbReference type="GO" id="GO:0042043">
    <property type="term" value="F:neurexin family protein binding"/>
    <property type="evidence" value="ECO:0000250"/>
    <property type="project" value="BHF-UCL"/>
</dbReference>
<dbReference type="GO" id="GO:0098609">
    <property type="term" value="P:cell-cell adhesion"/>
    <property type="evidence" value="ECO:0000303"/>
    <property type="project" value="UniProtKB"/>
</dbReference>
<dbReference type="GO" id="GO:0045217">
    <property type="term" value="P:cell-cell junction maintenance"/>
    <property type="evidence" value="ECO:0000303"/>
    <property type="project" value="UniProtKB"/>
</dbReference>
<dbReference type="GO" id="GO:0097116">
    <property type="term" value="P:gephyrin clustering involved in postsynaptic density assembly"/>
    <property type="evidence" value="ECO:0000250"/>
    <property type="project" value="BHF-UCL"/>
</dbReference>
<dbReference type="GO" id="GO:1904862">
    <property type="term" value="P:inhibitory synapse assembly"/>
    <property type="evidence" value="ECO:0007669"/>
    <property type="project" value="Ensembl"/>
</dbReference>
<dbReference type="GO" id="GO:1901142">
    <property type="term" value="P:insulin metabolic process"/>
    <property type="evidence" value="ECO:0007669"/>
    <property type="project" value="Ensembl"/>
</dbReference>
<dbReference type="GO" id="GO:0007630">
    <property type="term" value="P:jump response"/>
    <property type="evidence" value="ECO:0007669"/>
    <property type="project" value="Ensembl"/>
</dbReference>
<dbReference type="GO" id="GO:0035641">
    <property type="term" value="P:locomotory exploration behavior"/>
    <property type="evidence" value="ECO:0007669"/>
    <property type="project" value="Ensembl"/>
</dbReference>
<dbReference type="GO" id="GO:0050804">
    <property type="term" value="P:modulation of chemical synaptic transmission"/>
    <property type="evidence" value="ECO:0000250"/>
    <property type="project" value="BHF-UCL"/>
</dbReference>
<dbReference type="GO" id="GO:0050885">
    <property type="term" value="P:neuromuscular process controlling balance"/>
    <property type="evidence" value="ECO:0007669"/>
    <property type="project" value="Ensembl"/>
</dbReference>
<dbReference type="GO" id="GO:0007158">
    <property type="term" value="P:neuron cell-cell adhesion"/>
    <property type="evidence" value="ECO:0000250"/>
    <property type="project" value="BHF-UCL"/>
</dbReference>
<dbReference type="GO" id="GO:0072578">
    <property type="term" value="P:neurotransmitter-gated ion channel clustering"/>
    <property type="evidence" value="ECO:0007669"/>
    <property type="project" value="Ensembl"/>
</dbReference>
<dbReference type="GO" id="GO:0008284">
    <property type="term" value="P:positive regulation of cell population proliferation"/>
    <property type="evidence" value="ECO:0007669"/>
    <property type="project" value="Ensembl"/>
</dbReference>
<dbReference type="GO" id="GO:0060999">
    <property type="term" value="P:positive regulation of dendritic spine development"/>
    <property type="evidence" value="ECO:0007669"/>
    <property type="project" value="Ensembl"/>
</dbReference>
<dbReference type="GO" id="GO:2000463">
    <property type="term" value="P:positive regulation of excitatory postsynaptic potential"/>
    <property type="evidence" value="ECO:0000250"/>
    <property type="project" value="BHF-UCL"/>
</dbReference>
<dbReference type="GO" id="GO:0097151">
    <property type="term" value="P:positive regulation of inhibitory postsynaptic potential"/>
    <property type="evidence" value="ECO:0000250"/>
    <property type="project" value="BHF-UCL"/>
</dbReference>
<dbReference type="GO" id="GO:0032024">
    <property type="term" value="P:positive regulation of insulin secretion"/>
    <property type="evidence" value="ECO:0000315"/>
    <property type="project" value="CACAO"/>
</dbReference>
<dbReference type="GO" id="GO:1902474">
    <property type="term" value="P:positive regulation of protein localization to synapse"/>
    <property type="evidence" value="ECO:0000314"/>
    <property type="project" value="MGI"/>
</dbReference>
<dbReference type="GO" id="GO:0051965">
    <property type="term" value="P:positive regulation of synapse assembly"/>
    <property type="evidence" value="ECO:0000250"/>
    <property type="project" value="BHF-UCL"/>
</dbReference>
<dbReference type="GO" id="GO:0032230">
    <property type="term" value="P:positive regulation of synaptic transmission, GABAergic"/>
    <property type="evidence" value="ECO:0000250"/>
    <property type="project" value="BHF-UCL"/>
</dbReference>
<dbReference type="GO" id="GO:0051968">
    <property type="term" value="P:positive regulation of synaptic transmission, glutamatergic"/>
    <property type="evidence" value="ECO:0000250"/>
    <property type="project" value="BHF-UCL"/>
</dbReference>
<dbReference type="GO" id="GO:2000809">
    <property type="term" value="P:positive regulation of synaptic vesicle clustering"/>
    <property type="evidence" value="ECO:0007669"/>
    <property type="project" value="Ensembl"/>
</dbReference>
<dbReference type="GO" id="GO:1904034">
    <property type="term" value="P:positive regulation of t-SNARE clustering"/>
    <property type="evidence" value="ECO:0007669"/>
    <property type="project" value="Ensembl"/>
</dbReference>
<dbReference type="GO" id="GO:0097119">
    <property type="term" value="P:postsynaptic density protein 95 clustering"/>
    <property type="evidence" value="ECO:0000250"/>
    <property type="project" value="BHF-UCL"/>
</dbReference>
<dbReference type="GO" id="GO:0097104">
    <property type="term" value="P:postsynaptic membrane assembly"/>
    <property type="evidence" value="ECO:0000250"/>
    <property type="project" value="BHF-UCL"/>
</dbReference>
<dbReference type="GO" id="GO:0099054">
    <property type="term" value="P:presynapse assembly"/>
    <property type="evidence" value="ECO:0000304"/>
    <property type="project" value="ARUK-UCL"/>
</dbReference>
<dbReference type="GO" id="GO:0097105">
    <property type="term" value="P:presynaptic membrane assembly"/>
    <property type="evidence" value="ECO:0000250"/>
    <property type="project" value="BHF-UCL"/>
</dbReference>
<dbReference type="GO" id="GO:0034394">
    <property type="term" value="P:protein localization to cell surface"/>
    <property type="evidence" value="ECO:0007669"/>
    <property type="project" value="Ensembl"/>
</dbReference>
<dbReference type="GO" id="GO:0035418">
    <property type="term" value="P:protein localization to synapse"/>
    <property type="evidence" value="ECO:0000250"/>
    <property type="project" value="BHF-UCL"/>
</dbReference>
<dbReference type="GO" id="GO:1905606">
    <property type="term" value="P:regulation of presynapse assembly"/>
    <property type="evidence" value="ECO:0007669"/>
    <property type="project" value="Ensembl"/>
</dbReference>
<dbReference type="GO" id="GO:0002087">
    <property type="term" value="P:regulation of respiratory gaseous exchange by nervous system process"/>
    <property type="evidence" value="ECO:0000250"/>
    <property type="project" value="BHF-UCL"/>
</dbReference>
<dbReference type="GO" id="GO:0019233">
    <property type="term" value="P:sensory perception of pain"/>
    <property type="evidence" value="ECO:0007669"/>
    <property type="project" value="Ensembl"/>
</dbReference>
<dbReference type="GO" id="GO:0035176">
    <property type="term" value="P:social behavior"/>
    <property type="evidence" value="ECO:0007669"/>
    <property type="project" value="Ensembl"/>
</dbReference>
<dbReference type="GO" id="GO:0007416">
    <property type="term" value="P:synapse assembly"/>
    <property type="evidence" value="ECO:0000250"/>
    <property type="project" value="BHF-UCL"/>
</dbReference>
<dbReference type="GO" id="GO:0050808">
    <property type="term" value="P:synapse organization"/>
    <property type="evidence" value="ECO:0000250"/>
    <property type="project" value="BHF-UCL"/>
</dbReference>
<dbReference type="GO" id="GO:0051932">
    <property type="term" value="P:synaptic transmission, GABAergic"/>
    <property type="evidence" value="ECO:0007669"/>
    <property type="project" value="Ensembl"/>
</dbReference>
<dbReference type="GO" id="GO:0072553">
    <property type="term" value="P:terminal button organization"/>
    <property type="evidence" value="ECO:0000250"/>
    <property type="project" value="BHF-UCL"/>
</dbReference>
<dbReference type="GO" id="GO:0001966">
    <property type="term" value="P:thigmotaxis"/>
    <property type="evidence" value="ECO:0007669"/>
    <property type="project" value="Ensembl"/>
</dbReference>
<dbReference type="FunFam" id="3.40.50.1820:FF:000001">
    <property type="entry name" value="Neuroligin 3 isoform"/>
    <property type="match status" value="1"/>
</dbReference>
<dbReference type="Gene3D" id="3.40.50.1820">
    <property type="entry name" value="alpha/beta hydrolase"/>
    <property type="match status" value="1"/>
</dbReference>
<dbReference type="InterPro" id="IPR029058">
    <property type="entry name" value="AB_hydrolase_fold"/>
</dbReference>
<dbReference type="InterPro" id="IPR002018">
    <property type="entry name" value="CarbesteraseB"/>
</dbReference>
<dbReference type="InterPro" id="IPR019819">
    <property type="entry name" value="Carboxylesterase_B_CS"/>
</dbReference>
<dbReference type="InterPro" id="IPR051093">
    <property type="entry name" value="Neuroligin/BSAL"/>
</dbReference>
<dbReference type="InterPro" id="IPR000460">
    <property type="entry name" value="Nlgn"/>
</dbReference>
<dbReference type="PANTHER" id="PTHR43903">
    <property type="entry name" value="NEUROLIGIN"/>
    <property type="match status" value="1"/>
</dbReference>
<dbReference type="Pfam" id="PF00135">
    <property type="entry name" value="COesterase"/>
    <property type="match status" value="1"/>
</dbReference>
<dbReference type="PRINTS" id="PR01090">
    <property type="entry name" value="NEUROLIGIN"/>
</dbReference>
<dbReference type="SUPFAM" id="SSF53474">
    <property type="entry name" value="alpha/beta-Hydrolases"/>
    <property type="match status" value="1"/>
</dbReference>
<dbReference type="PROSITE" id="PS00941">
    <property type="entry name" value="CARBOXYLESTERASE_B_2"/>
    <property type="match status" value="1"/>
</dbReference>